<organism>
    <name type="scientific">Burkholderia pseudomallei (strain 1106a)</name>
    <dbReference type="NCBI Taxonomy" id="357348"/>
    <lineage>
        <taxon>Bacteria</taxon>
        <taxon>Pseudomonadati</taxon>
        <taxon>Pseudomonadota</taxon>
        <taxon>Betaproteobacteria</taxon>
        <taxon>Burkholderiales</taxon>
        <taxon>Burkholderiaceae</taxon>
        <taxon>Burkholderia</taxon>
        <taxon>pseudomallei group</taxon>
    </lineage>
</organism>
<feature type="chain" id="PRO_0000303696" description="Exodeoxyribonuclease 7 small subunit">
    <location>
        <begin position="1"/>
        <end position="97"/>
    </location>
</feature>
<feature type="region of interest" description="Disordered" evidence="2">
    <location>
        <begin position="1"/>
        <end position="21"/>
    </location>
</feature>
<proteinExistence type="inferred from homology"/>
<evidence type="ECO:0000255" key="1">
    <source>
        <dbReference type="HAMAP-Rule" id="MF_00337"/>
    </source>
</evidence>
<evidence type="ECO:0000256" key="2">
    <source>
        <dbReference type="SAM" id="MobiDB-lite"/>
    </source>
</evidence>
<protein>
    <recommendedName>
        <fullName evidence="1">Exodeoxyribonuclease 7 small subunit</fullName>
        <ecNumber evidence="1">3.1.11.6</ecNumber>
    </recommendedName>
    <alternativeName>
        <fullName evidence="1">Exodeoxyribonuclease VII small subunit</fullName>
        <shortName evidence="1">Exonuclease VII small subunit</shortName>
    </alternativeName>
</protein>
<reference key="1">
    <citation type="journal article" date="2010" name="Genome Biol. Evol.">
        <title>Continuing evolution of Burkholderia mallei through genome reduction and large-scale rearrangements.</title>
        <authorList>
            <person name="Losada L."/>
            <person name="Ronning C.M."/>
            <person name="DeShazer D."/>
            <person name="Woods D."/>
            <person name="Fedorova N."/>
            <person name="Kim H.S."/>
            <person name="Shabalina S.A."/>
            <person name="Pearson T.R."/>
            <person name="Brinkac L."/>
            <person name="Tan P."/>
            <person name="Nandi T."/>
            <person name="Crabtree J."/>
            <person name="Badger J."/>
            <person name="Beckstrom-Sternberg S."/>
            <person name="Saqib M."/>
            <person name="Schutzer S.E."/>
            <person name="Keim P."/>
            <person name="Nierman W.C."/>
        </authorList>
    </citation>
    <scope>NUCLEOTIDE SEQUENCE [LARGE SCALE GENOMIC DNA]</scope>
    <source>
        <strain>1106a</strain>
    </source>
</reference>
<sequence length="97" mass="9967">MAKTATPGACASDPGSGPLPENYEMALAELEALVARMEGGTLSLEDSLAAYRRGAALVAFCQQQLEKAEQQVRVLDGASLKPLSAGTAAADGEDDDL</sequence>
<dbReference type="EC" id="3.1.11.6" evidence="1"/>
<dbReference type="EMBL" id="CP000573">
    <property type="protein sequence ID" value="ABN94978.1"/>
    <property type="molecule type" value="Genomic_DNA"/>
</dbReference>
<dbReference type="RefSeq" id="WP_004190549.1">
    <property type="nucleotide sequence ID" value="NC_009078.1"/>
</dbReference>
<dbReference type="SMR" id="A3P7W6"/>
<dbReference type="KEGG" id="bpl:BURPS1106A_A2394"/>
<dbReference type="HOGENOM" id="CLU_145918_2_0_4"/>
<dbReference type="Proteomes" id="UP000006738">
    <property type="component" value="Chromosome II"/>
</dbReference>
<dbReference type="GO" id="GO:0005829">
    <property type="term" value="C:cytosol"/>
    <property type="evidence" value="ECO:0007669"/>
    <property type="project" value="TreeGrafter"/>
</dbReference>
<dbReference type="GO" id="GO:0009318">
    <property type="term" value="C:exodeoxyribonuclease VII complex"/>
    <property type="evidence" value="ECO:0007669"/>
    <property type="project" value="InterPro"/>
</dbReference>
<dbReference type="GO" id="GO:0008855">
    <property type="term" value="F:exodeoxyribonuclease VII activity"/>
    <property type="evidence" value="ECO:0007669"/>
    <property type="project" value="UniProtKB-UniRule"/>
</dbReference>
<dbReference type="GO" id="GO:0006308">
    <property type="term" value="P:DNA catabolic process"/>
    <property type="evidence" value="ECO:0007669"/>
    <property type="project" value="UniProtKB-UniRule"/>
</dbReference>
<dbReference type="Gene3D" id="1.10.287.1040">
    <property type="entry name" value="Exonuclease VII, small subunit"/>
    <property type="match status" value="1"/>
</dbReference>
<dbReference type="HAMAP" id="MF_00337">
    <property type="entry name" value="Exonuc_7_S"/>
    <property type="match status" value="1"/>
</dbReference>
<dbReference type="InterPro" id="IPR003761">
    <property type="entry name" value="Exonuc_VII_S"/>
</dbReference>
<dbReference type="InterPro" id="IPR037004">
    <property type="entry name" value="Exonuc_VII_ssu_sf"/>
</dbReference>
<dbReference type="NCBIfam" id="NF002141">
    <property type="entry name" value="PRK00977.1-5"/>
    <property type="match status" value="1"/>
</dbReference>
<dbReference type="NCBIfam" id="TIGR01280">
    <property type="entry name" value="xseB"/>
    <property type="match status" value="1"/>
</dbReference>
<dbReference type="PANTHER" id="PTHR34137">
    <property type="entry name" value="EXODEOXYRIBONUCLEASE 7 SMALL SUBUNIT"/>
    <property type="match status" value="1"/>
</dbReference>
<dbReference type="PANTHER" id="PTHR34137:SF1">
    <property type="entry name" value="EXODEOXYRIBONUCLEASE 7 SMALL SUBUNIT"/>
    <property type="match status" value="1"/>
</dbReference>
<dbReference type="Pfam" id="PF02609">
    <property type="entry name" value="Exonuc_VII_S"/>
    <property type="match status" value="1"/>
</dbReference>
<dbReference type="SUPFAM" id="SSF116842">
    <property type="entry name" value="XseB-like"/>
    <property type="match status" value="1"/>
</dbReference>
<name>EX7S_BURP0</name>
<gene>
    <name evidence="1" type="primary">xseB</name>
    <name type="ordered locus">BURPS1106A_A2394</name>
</gene>
<accession>A3P7W6</accession>
<comment type="function">
    <text evidence="1">Bidirectionally degrades single-stranded DNA into large acid-insoluble oligonucleotides, which are then degraded further into small acid-soluble oligonucleotides.</text>
</comment>
<comment type="catalytic activity">
    <reaction evidence="1">
        <text>Exonucleolytic cleavage in either 5'- to 3'- or 3'- to 5'-direction to yield nucleoside 5'-phosphates.</text>
        <dbReference type="EC" id="3.1.11.6"/>
    </reaction>
</comment>
<comment type="subunit">
    <text evidence="1">Heterooligomer composed of large and small subunits.</text>
</comment>
<comment type="subcellular location">
    <subcellularLocation>
        <location evidence="1">Cytoplasm</location>
    </subcellularLocation>
</comment>
<comment type="similarity">
    <text evidence="1">Belongs to the XseB family.</text>
</comment>
<keyword id="KW-0963">Cytoplasm</keyword>
<keyword id="KW-0269">Exonuclease</keyword>
<keyword id="KW-0378">Hydrolase</keyword>
<keyword id="KW-0540">Nuclease</keyword>